<sequence>MLIPHYLHQLQLCARNRTLTTAKALHAHIVKLGIVQCCPLANTLVNVYGKCGAASHALQVFDEMPHRDHIAWASVLTALNQANLSGKTLSVFSSVGSSSGLRPDDFVFSALVKACANLGSIDHGRQVHCHFIVSEYANDEVVKSSLVDMYAKCGLLNSAKAVFDSIRVKNTISWTAMVSGYAKSGRKEEALELFRILPVKNLYSWTALISGFVQSGKGLEAFSVFTEMRRERVDILDPLVLSSIVGACANLAASIAGRQVHGLVIALGFDSCVFISNALIDMYAKCSDVIAAKDIFSRMRHRDVVSWTSLIVGMAQHGQAEKALALYDDMVSHGVKPNEVTFVGLIYACSHVGFVEKGRELFQSMTKDYGIRPSLQHYTCLLDLLGRSGLLDEAENLIHTMPFPPDEPTWAALLSACKRQGRGQMGIRIADHLVSSFKLKDPSTYILLSNIYASASLWGKVSEARRKLGEMEVRKDPGHSSVEVRKETEVFYAGETSHPLKEDIFRLLKKLEEEMRIRNGYVPDTSWILHDMDEQEKEKLLFWHSERSAVAYGLLKAVPGTPIRIVKNLRVCGDCHVVLKHISEITEREIIVRDATRYHHFKGGKCSCNDFW</sequence>
<reference key="1">
    <citation type="journal article" date="1998" name="Nature">
        <title>Analysis of 1.9 Mb of contiguous sequence from chromosome 4 of Arabidopsis thaliana.</title>
        <authorList>
            <person name="Bevan M."/>
            <person name="Bancroft I."/>
            <person name="Bent E."/>
            <person name="Love K."/>
            <person name="Goodman H.M."/>
            <person name="Dean C."/>
            <person name="Bergkamp R."/>
            <person name="Dirkse W."/>
            <person name="van Staveren M."/>
            <person name="Stiekema W."/>
            <person name="Drost L."/>
            <person name="Ridley P."/>
            <person name="Hudson S.-A."/>
            <person name="Patel K."/>
            <person name="Murphy G."/>
            <person name="Piffanelli P."/>
            <person name="Wedler H."/>
            <person name="Wedler E."/>
            <person name="Wambutt R."/>
            <person name="Weitzenegger T."/>
            <person name="Pohl T."/>
            <person name="Terryn N."/>
            <person name="Gielen J."/>
            <person name="Villarroel R."/>
            <person name="De Clercq R."/>
            <person name="van Montagu M."/>
            <person name="Lecharny A."/>
            <person name="Aubourg S."/>
            <person name="Gy I."/>
            <person name="Kreis M."/>
            <person name="Lao N."/>
            <person name="Kavanagh T."/>
            <person name="Hempel S."/>
            <person name="Kotter P."/>
            <person name="Entian K.-D."/>
            <person name="Rieger M."/>
            <person name="Schaefer M."/>
            <person name="Funk B."/>
            <person name="Mueller-Auer S."/>
            <person name="Silvey M."/>
            <person name="James R."/>
            <person name="Monfort A."/>
            <person name="Pons A."/>
            <person name="Puigdomenech P."/>
            <person name="Douka A."/>
            <person name="Voukelatou E."/>
            <person name="Milioni D."/>
            <person name="Hatzopoulos P."/>
            <person name="Piravandi E."/>
            <person name="Obermaier B."/>
            <person name="Hilbert H."/>
            <person name="Duesterhoeft A."/>
            <person name="Moores T."/>
            <person name="Jones J.D.G."/>
            <person name="Eneva T."/>
            <person name="Palme K."/>
            <person name="Benes V."/>
            <person name="Rechmann S."/>
            <person name="Ansorge W."/>
            <person name="Cooke R."/>
            <person name="Berger C."/>
            <person name="Delseny M."/>
            <person name="Voet M."/>
            <person name="Volckaert G."/>
            <person name="Mewes H.-W."/>
            <person name="Klosterman S."/>
            <person name="Schueller C."/>
            <person name="Chalwatzis N."/>
        </authorList>
    </citation>
    <scope>NUCLEOTIDE SEQUENCE [LARGE SCALE GENOMIC DNA]</scope>
    <source>
        <strain>cv. Columbia</strain>
    </source>
</reference>
<reference key="2">
    <citation type="journal article" date="1999" name="Nature">
        <title>Sequence and analysis of chromosome 4 of the plant Arabidopsis thaliana.</title>
        <authorList>
            <person name="Mayer K.F.X."/>
            <person name="Schueller C."/>
            <person name="Wambutt R."/>
            <person name="Murphy G."/>
            <person name="Volckaert G."/>
            <person name="Pohl T."/>
            <person name="Duesterhoeft A."/>
            <person name="Stiekema W."/>
            <person name="Entian K.-D."/>
            <person name="Terryn N."/>
            <person name="Harris B."/>
            <person name="Ansorge W."/>
            <person name="Brandt P."/>
            <person name="Grivell L.A."/>
            <person name="Rieger M."/>
            <person name="Weichselgartner M."/>
            <person name="de Simone V."/>
            <person name="Obermaier B."/>
            <person name="Mache R."/>
            <person name="Mueller M."/>
            <person name="Kreis M."/>
            <person name="Delseny M."/>
            <person name="Puigdomenech P."/>
            <person name="Watson M."/>
            <person name="Schmidtheini T."/>
            <person name="Reichert B."/>
            <person name="Portetelle D."/>
            <person name="Perez-Alonso M."/>
            <person name="Boutry M."/>
            <person name="Bancroft I."/>
            <person name="Vos P."/>
            <person name="Hoheisel J."/>
            <person name="Zimmermann W."/>
            <person name="Wedler H."/>
            <person name="Ridley P."/>
            <person name="Langham S.-A."/>
            <person name="McCullagh B."/>
            <person name="Bilham L."/>
            <person name="Robben J."/>
            <person name="van der Schueren J."/>
            <person name="Grymonprez B."/>
            <person name="Chuang Y.-J."/>
            <person name="Vandenbussche F."/>
            <person name="Braeken M."/>
            <person name="Weltjens I."/>
            <person name="Voet M."/>
            <person name="Bastiaens I."/>
            <person name="Aert R."/>
            <person name="Defoor E."/>
            <person name="Weitzenegger T."/>
            <person name="Bothe G."/>
            <person name="Ramsperger U."/>
            <person name="Hilbert H."/>
            <person name="Braun M."/>
            <person name="Holzer E."/>
            <person name="Brandt A."/>
            <person name="Peters S."/>
            <person name="van Staveren M."/>
            <person name="Dirkse W."/>
            <person name="Mooijman P."/>
            <person name="Klein Lankhorst R."/>
            <person name="Rose M."/>
            <person name="Hauf J."/>
            <person name="Koetter P."/>
            <person name="Berneiser S."/>
            <person name="Hempel S."/>
            <person name="Feldpausch M."/>
            <person name="Lamberth S."/>
            <person name="Van den Daele H."/>
            <person name="De Keyser A."/>
            <person name="Buysshaert C."/>
            <person name="Gielen J."/>
            <person name="Villarroel R."/>
            <person name="De Clercq R."/>
            <person name="van Montagu M."/>
            <person name="Rogers J."/>
            <person name="Cronin A."/>
            <person name="Quail M.A."/>
            <person name="Bray-Allen S."/>
            <person name="Clark L."/>
            <person name="Doggett J."/>
            <person name="Hall S."/>
            <person name="Kay M."/>
            <person name="Lennard N."/>
            <person name="McLay K."/>
            <person name="Mayes R."/>
            <person name="Pettett A."/>
            <person name="Rajandream M.A."/>
            <person name="Lyne M."/>
            <person name="Benes V."/>
            <person name="Rechmann S."/>
            <person name="Borkova D."/>
            <person name="Bloecker H."/>
            <person name="Scharfe M."/>
            <person name="Grimm M."/>
            <person name="Loehnert T.-H."/>
            <person name="Dose S."/>
            <person name="de Haan M."/>
            <person name="Maarse A.C."/>
            <person name="Schaefer M."/>
            <person name="Mueller-Auer S."/>
            <person name="Gabel C."/>
            <person name="Fuchs M."/>
            <person name="Fartmann B."/>
            <person name="Granderath K."/>
            <person name="Dauner D."/>
            <person name="Herzl A."/>
            <person name="Neumann S."/>
            <person name="Argiriou A."/>
            <person name="Vitale D."/>
            <person name="Liguori R."/>
            <person name="Piravandi E."/>
            <person name="Massenet O."/>
            <person name="Quigley F."/>
            <person name="Clabauld G."/>
            <person name="Muendlein A."/>
            <person name="Felber R."/>
            <person name="Schnabl S."/>
            <person name="Hiller R."/>
            <person name="Schmidt W."/>
            <person name="Lecharny A."/>
            <person name="Aubourg S."/>
            <person name="Chefdor F."/>
            <person name="Cooke R."/>
            <person name="Berger C."/>
            <person name="Monfort A."/>
            <person name="Casacuberta E."/>
            <person name="Gibbons T."/>
            <person name="Weber N."/>
            <person name="Vandenbol M."/>
            <person name="Bargues M."/>
            <person name="Terol J."/>
            <person name="Torres A."/>
            <person name="Perez-Perez A."/>
            <person name="Purnelle B."/>
            <person name="Bent E."/>
            <person name="Johnson S."/>
            <person name="Tacon D."/>
            <person name="Jesse T."/>
            <person name="Heijnen L."/>
            <person name="Schwarz S."/>
            <person name="Scholler P."/>
            <person name="Heber S."/>
            <person name="Francs P."/>
            <person name="Bielke C."/>
            <person name="Frishman D."/>
            <person name="Haase D."/>
            <person name="Lemcke K."/>
            <person name="Mewes H.-W."/>
            <person name="Stocker S."/>
            <person name="Zaccaria P."/>
            <person name="Bevan M."/>
            <person name="Wilson R.K."/>
            <person name="de la Bastide M."/>
            <person name="Habermann K."/>
            <person name="Parnell L."/>
            <person name="Dedhia N."/>
            <person name="Gnoj L."/>
            <person name="Schutz K."/>
            <person name="Huang E."/>
            <person name="Spiegel L."/>
            <person name="Sekhon M."/>
            <person name="Murray J."/>
            <person name="Sheet P."/>
            <person name="Cordes M."/>
            <person name="Abu-Threideh J."/>
            <person name="Stoneking T."/>
            <person name="Kalicki J."/>
            <person name="Graves T."/>
            <person name="Harmon G."/>
            <person name="Edwards J."/>
            <person name="Latreille P."/>
            <person name="Courtney L."/>
            <person name="Cloud J."/>
            <person name="Abbott A."/>
            <person name="Scott K."/>
            <person name="Johnson D."/>
            <person name="Minx P."/>
            <person name="Bentley D."/>
            <person name="Fulton B."/>
            <person name="Miller N."/>
            <person name="Greco T."/>
            <person name="Kemp K."/>
            <person name="Kramer J."/>
            <person name="Fulton L."/>
            <person name="Mardis E."/>
            <person name="Dante M."/>
            <person name="Pepin K."/>
            <person name="Hillier L.W."/>
            <person name="Nelson J."/>
            <person name="Spieth J."/>
            <person name="Ryan E."/>
            <person name="Andrews S."/>
            <person name="Geisel C."/>
            <person name="Layman D."/>
            <person name="Du H."/>
            <person name="Ali J."/>
            <person name="Berghoff A."/>
            <person name="Jones K."/>
            <person name="Drone K."/>
            <person name="Cotton M."/>
            <person name="Joshu C."/>
            <person name="Antonoiu B."/>
            <person name="Zidanic M."/>
            <person name="Strong C."/>
            <person name="Sun H."/>
            <person name="Lamar B."/>
            <person name="Yordan C."/>
            <person name="Ma P."/>
            <person name="Zhong J."/>
            <person name="Preston R."/>
            <person name="Vil D."/>
            <person name="Shekher M."/>
            <person name="Matero A."/>
            <person name="Shah R."/>
            <person name="Swaby I.K."/>
            <person name="O'Shaughnessy A."/>
            <person name="Rodriguez M."/>
            <person name="Hoffman J."/>
            <person name="Till S."/>
            <person name="Granat S."/>
            <person name="Shohdy N."/>
            <person name="Hasegawa A."/>
            <person name="Hameed A."/>
            <person name="Lodhi M."/>
            <person name="Johnson A."/>
            <person name="Chen E."/>
            <person name="Marra M.A."/>
            <person name="Martienssen R."/>
            <person name="McCombie W.R."/>
        </authorList>
    </citation>
    <scope>NUCLEOTIDE SEQUENCE [LARGE SCALE GENOMIC DNA]</scope>
    <source>
        <strain>cv. Columbia</strain>
    </source>
</reference>
<reference key="3">
    <citation type="journal article" date="2017" name="Plant J.">
        <title>Araport11: a complete reannotation of the Arabidopsis thaliana reference genome.</title>
        <authorList>
            <person name="Cheng C.Y."/>
            <person name="Krishnakumar V."/>
            <person name="Chan A.P."/>
            <person name="Thibaud-Nissen F."/>
            <person name="Schobel S."/>
            <person name="Town C.D."/>
        </authorList>
    </citation>
    <scope>GENOME REANNOTATION</scope>
    <source>
        <strain>cv. Columbia</strain>
    </source>
</reference>
<reference key="4">
    <citation type="journal article" date="2004" name="Genome Res.">
        <title>Whole genome sequence comparisons and 'full-length' cDNA sequences: a combined approach to evaluate and improve Arabidopsis genome annotation.</title>
        <authorList>
            <person name="Castelli V."/>
            <person name="Aury J.-M."/>
            <person name="Jaillon O."/>
            <person name="Wincker P."/>
            <person name="Clepet C."/>
            <person name="Menard M."/>
            <person name="Cruaud C."/>
            <person name="Quetier F."/>
            <person name="Scarpelli C."/>
            <person name="Schaechter V."/>
            <person name="Temple G."/>
            <person name="Caboche M."/>
            <person name="Weissenbach J."/>
            <person name="Salanoubat M."/>
        </authorList>
    </citation>
    <scope>NUCLEOTIDE SEQUENCE [LARGE SCALE MRNA] OF 1-308</scope>
    <source>
        <strain>cv. Columbia</strain>
    </source>
</reference>
<reference key="5">
    <citation type="journal article" date="2000" name="Plant Mol. Biol.">
        <title>In Arabidopsis thaliana, 1% of the genome codes for a novel protein family unique to plants.</title>
        <authorList>
            <person name="Aubourg S."/>
            <person name="Boudet N."/>
            <person name="Kreis M."/>
            <person name="Lecharny A."/>
        </authorList>
    </citation>
    <scope>GENE FAMILY</scope>
</reference>
<reference key="6">
    <citation type="journal article" date="2004" name="Plant Cell">
        <title>Genome-wide analysis of Arabidopsis pentatricopeptide repeat proteins reveals their essential role in organelle biogenesis.</title>
        <authorList>
            <person name="Lurin C."/>
            <person name="Andres C."/>
            <person name="Aubourg S."/>
            <person name="Bellaoui M."/>
            <person name="Bitton F."/>
            <person name="Bruyere C."/>
            <person name="Caboche M."/>
            <person name="Debast C."/>
            <person name="Gualberto J."/>
            <person name="Hoffmann B."/>
            <person name="Lecharny A."/>
            <person name="Le Ret M."/>
            <person name="Martin-Magniette M.-L."/>
            <person name="Mireau H."/>
            <person name="Peeters N."/>
            <person name="Renou J.-P."/>
            <person name="Szurek B."/>
            <person name="Taconnat L."/>
            <person name="Small I."/>
        </authorList>
    </citation>
    <scope>GENE FAMILY</scope>
</reference>
<reference key="7">
    <citation type="journal article" date="2015" name="PLoS ONE">
        <title>The DYW subgroup PPR protein MEF35 targets RNA editing sites in the mitochondrial rpl16, nad4 and cob mRNAs in Arabidopsis thaliana.</title>
        <authorList>
            <person name="Brehme N."/>
            <person name="Bayer-Csaszar E."/>
            <person name="Glass F."/>
            <person name="Takenaka M."/>
        </authorList>
    </citation>
    <scope>FUNCTION</scope>
    <scope>INTERACTION WITH MORF8/RIP1 AND MORF1/RIP8</scope>
</reference>
<organism>
    <name type="scientific">Arabidopsis thaliana</name>
    <name type="common">Mouse-ear cress</name>
    <dbReference type="NCBI Taxonomy" id="3702"/>
    <lineage>
        <taxon>Eukaryota</taxon>
        <taxon>Viridiplantae</taxon>
        <taxon>Streptophyta</taxon>
        <taxon>Embryophyta</taxon>
        <taxon>Tracheophyta</taxon>
        <taxon>Spermatophyta</taxon>
        <taxon>Magnoliopsida</taxon>
        <taxon>eudicotyledons</taxon>
        <taxon>Gunneridae</taxon>
        <taxon>Pentapetalae</taxon>
        <taxon>rosids</taxon>
        <taxon>malvids</taxon>
        <taxon>Brassicales</taxon>
        <taxon>Brassicaceae</taxon>
        <taxon>Camelineae</taxon>
        <taxon>Arabidopsis</taxon>
    </lineage>
</organism>
<accession>O23266</accession>
<feature type="transit peptide" description="Mitochondrion" evidence="1">
    <location>
        <begin position="1"/>
        <end position="24"/>
    </location>
</feature>
<feature type="chain" id="PRO_0000363426" description="Pentatricopeptide repeat-containing protein At4g14050, mitochondrial">
    <location>
        <begin position="25"/>
        <end position="612"/>
    </location>
</feature>
<feature type="repeat" description="PPR 1">
    <location>
        <begin position="37"/>
        <end position="71"/>
    </location>
</feature>
<feature type="repeat" description="PPR 2">
    <location>
        <begin position="72"/>
        <end position="103"/>
    </location>
</feature>
<feature type="repeat" description="PPR 3">
    <location>
        <begin position="104"/>
        <end position="138"/>
    </location>
</feature>
<feature type="repeat" description="PPR 4">
    <location>
        <begin position="139"/>
        <end position="169"/>
    </location>
</feature>
<feature type="repeat" description="PPR 5">
    <location>
        <begin position="170"/>
        <end position="204"/>
    </location>
</feature>
<feature type="repeat" description="PPR 6">
    <location>
        <begin position="205"/>
        <end position="235"/>
    </location>
</feature>
<feature type="repeat" description="PPR 7">
    <location>
        <begin position="237"/>
        <end position="271"/>
    </location>
</feature>
<feature type="repeat" description="PPR 8">
    <location>
        <begin position="272"/>
        <end position="302"/>
    </location>
</feature>
<feature type="repeat" description="PPR 9">
    <location>
        <begin position="303"/>
        <end position="337"/>
    </location>
</feature>
<feature type="repeat" description="PPR 10">
    <location>
        <begin position="338"/>
        <end position="373"/>
    </location>
</feature>
<feature type="repeat" description="PPR 11">
    <location>
        <begin position="374"/>
        <end position="408"/>
    </location>
</feature>
<feature type="region of interest" description="Type E motif">
    <location>
        <begin position="409"/>
        <end position="485"/>
    </location>
</feature>
<feature type="region of interest" description="Type E(+) motif">
    <location>
        <begin position="486"/>
        <end position="516"/>
    </location>
</feature>
<feature type="region of interest" description="Type DYW motif">
    <location>
        <begin position="518"/>
        <end position="612"/>
    </location>
</feature>
<dbReference type="EMBL" id="Z97335">
    <property type="protein sequence ID" value="CAB46001.1"/>
    <property type="status" value="ALT_SEQ"/>
    <property type="molecule type" value="Genomic_DNA"/>
</dbReference>
<dbReference type="EMBL" id="AL161537">
    <property type="protein sequence ID" value="CAB78447.1"/>
    <property type="status" value="ALT_SEQ"/>
    <property type="molecule type" value="Genomic_DNA"/>
</dbReference>
<dbReference type="EMBL" id="CP002687">
    <property type="protein sequence ID" value="AEE83365.1"/>
    <property type="molecule type" value="Genomic_DNA"/>
</dbReference>
<dbReference type="EMBL" id="BX840233">
    <property type="status" value="NOT_ANNOTATED_CDS"/>
    <property type="molecule type" value="mRNA"/>
</dbReference>
<dbReference type="PIR" id="B85153">
    <property type="entry name" value="B85153"/>
</dbReference>
<dbReference type="PIR" id="F71401">
    <property type="entry name" value="F71401"/>
</dbReference>
<dbReference type="RefSeq" id="NP_193141.2">
    <property type="nucleotide sequence ID" value="NM_117480.4"/>
</dbReference>
<dbReference type="SMR" id="O23266"/>
<dbReference type="FunCoup" id="O23266">
    <property type="interactions" value="751"/>
</dbReference>
<dbReference type="STRING" id="3702.O23266"/>
<dbReference type="PaxDb" id="3702-AT4G14050.1"/>
<dbReference type="ProteomicsDB" id="248980"/>
<dbReference type="EnsemblPlants" id="AT4G14050.1">
    <property type="protein sequence ID" value="AT4G14050.1"/>
    <property type="gene ID" value="AT4G14050"/>
</dbReference>
<dbReference type="GeneID" id="827041"/>
<dbReference type="Gramene" id="AT4G14050.1">
    <property type="protein sequence ID" value="AT4G14050.1"/>
    <property type="gene ID" value="AT4G14050"/>
</dbReference>
<dbReference type="KEGG" id="ath:AT4G14050"/>
<dbReference type="Araport" id="AT4G14050"/>
<dbReference type="TAIR" id="AT4G14050">
    <property type="gene designation" value="MEF35"/>
</dbReference>
<dbReference type="eggNOG" id="KOG4197">
    <property type="taxonomic scope" value="Eukaryota"/>
</dbReference>
<dbReference type="HOGENOM" id="CLU_002706_37_2_1"/>
<dbReference type="InParanoid" id="O23266"/>
<dbReference type="OMA" id="ACKHHGN"/>
<dbReference type="PhylomeDB" id="O23266"/>
<dbReference type="PRO" id="PR:O23266"/>
<dbReference type="Proteomes" id="UP000006548">
    <property type="component" value="Chromosome 4"/>
</dbReference>
<dbReference type="ExpressionAtlas" id="O23266">
    <property type="expression patterns" value="baseline and differential"/>
</dbReference>
<dbReference type="GO" id="GO:0005739">
    <property type="term" value="C:mitochondrion"/>
    <property type="evidence" value="ECO:0007669"/>
    <property type="project" value="UniProtKB-SubCell"/>
</dbReference>
<dbReference type="GO" id="GO:0003723">
    <property type="term" value="F:RNA binding"/>
    <property type="evidence" value="ECO:0007669"/>
    <property type="project" value="InterPro"/>
</dbReference>
<dbReference type="GO" id="GO:0008270">
    <property type="term" value="F:zinc ion binding"/>
    <property type="evidence" value="ECO:0007669"/>
    <property type="project" value="InterPro"/>
</dbReference>
<dbReference type="GO" id="GO:0016554">
    <property type="term" value="P:cytidine to uridine editing"/>
    <property type="evidence" value="ECO:0000315"/>
    <property type="project" value="UniProtKB"/>
</dbReference>
<dbReference type="GO" id="GO:0006397">
    <property type="term" value="P:mRNA processing"/>
    <property type="evidence" value="ECO:0007669"/>
    <property type="project" value="UniProtKB-KW"/>
</dbReference>
<dbReference type="FunFam" id="1.25.40.10:FF:001307">
    <property type="entry name" value="Pentatricopeptide repeat-containing protein At4g14050, mitochondrial"/>
    <property type="match status" value="1"/>
</dbReference>
<dbReference type="FunFam" id="1.25.40.10:FF:001673">
    <property type="entry name" value="Pentatricopeptide repeat-containing protein At4g14050, mitochondrial"/>
    <property type="match status" value="1"/>
</dbReference>
<dbReference type="FunFam" id="1.25.40.10:FF:001797">
    <property type="entry name" value="Pentatricopeptide repeat-containing protein At4g14050, mitochondrial"/>
    <property type="match status" value="1"/>
</dbReference>
<dbReference type="FunFam" id="1.25.40.10:FF:000243">
    <property type="entry name" value="Pentatricopeptide repeat-containing protein chloroplastic"/>
    <property type="match status" value="1"/>
</dbReference>
<dbReference type="Gene3D" id="1.25.40.10">
    <property type="entry name" value="Tetratricopeptide repeat domain"/>
    <property type="match status" value="4"/>
</dbReference>
<dbReference type="InterPro" id="IPR032867">
    <property type="entry name" value="DYW_dom"/>
</dbReference>
<dbReference type="InterPro" id="IPR046848">
    <property type="entry name" value="E_motif"/>
</dbReference>
<dbReference type="InterPro" id="IPR002885">
    <property type="entry name" value="Pentatricopeptide_rpt"/>
</dbReference>
<dbReference type="InterPro" id="IPR046960">
    <property type="entry name" value="PPR_At4g14850-like_plant"/>
</dbReference>
<dbReference type="InterPro" id="IPR011990">
    <property type="entry name" value="TPR-like_helical_dom_sf"/>
</dbReference>
<dbReference type="NCBIfam" id="TIGR00756">
    <property type="entry name" value="PPR"/>
    <property type="match status" value="4"/>
</dbReference>
<dbReference type="PANTHER" id="PTHR47926:SF495">
    <property type="entry name" value="DYW DOMAIN-CONTAINING PROTEIN"/>
    <property type="match status" value="1"/>
</dbReference>
<dbReference type="PANTHER" id="PTHR47926">
    <property type="entry name" value="PENTATRICOPEPTIDE REPEAT-CONTAINING PROTEIN"/>
    <property type="match status" value="1"/>
</dbReference>
<dbReference type="Pfam" id="PF14432">
    <property type="entry name" value="DYW_deaminase"/>
    <property type="match status" value="1"/>
</dbReference>
<dbReference type="Pfam" id="PF20431">
    <property type="entry name" value="E_motif"/>
    <property type="match status" value="1"/>
</dbReference>
<dbReference type="Pfam" id="PF01535">
    <property type="entry name" value="PPR"/>
    <property type="match status" value="5"/>
</dbReference>
<dbReference type="Pfam" id="PF13041">
    <property type="entry name" value="PPR_2"/>
    <property type="match status" value="1"/>
</dbReference>
<dbReference type="PROSITE" id="PS51375">
    <property type="entry name" value="PPR"/>
    <property type="match status" value="10"/>
</dbReference>
<protein>
    <recommendedName>
        <fullName>Pentatricopeptide repeat-containing protein At4g14050, mitochondrial</fullName>
    </recommendedName>
    <alternativeName>
        <fullName evidence="3">Mitochondrial editing factor 35</fullName>
    </alternativeName>
</protein>
<keyword id="KW-0496">Mitochondrion</keyword>
<keyword id="KW-0507">mRNA processing</keyword>
<keyword id="KW-1185">Reference proteome</keyword>
<keyword id="KW-0677">Repeat</keyword>
<keyword id="KW-0809">Transit peptide</keyword>
<proteinExistence type="evidence at protein level"/>
<evidence type="ECO:0000255" key="1"/>
<evidence type="ECO:0000269" key="2">
    <source>
    </source>
</evidence>
<evidence type="ECO:0000303" key="3">
    <source>
    </source>
</evidence>
<evidence type="ECO:0000305" key="4"/>
<gene>
    <name type="primary">PCMP-H13</name>
    <name evidence="3" type="synonym">MEF35</name>
    <name type="ordered locus">At4g14050</name>
    <name type="ORF">dl3066c</name>
    <name type="ORF">FCAALL.80</name>
</gene>
<comment type="function">
    <text evidence="2">Involved in C-to-U editing of mitochondrial RNA. Required specifically for editing the mitochondrial NAD4, MT-CYB/COB and RPL16 transcripts.</text>
</comment>
<comment type="subunit">
    <text evidence="2">Interacts with MORF8/RIP1 and MORF1/RIP8.</text>
</comment>
<comment type="subcellular location">
    <subcellularLocation>
        <location evidence="4">Mitochondrion</location>
    </subcellularLocation>
</comment>
<comment type="similarity">
    <text evidence="4">Belongs to the PPR family. PCMP-H subfamily.</text>
</comment>
<comment type="sequence caution" evidence="4">
    <conflict type="miscellaneous discrepancy">
        <sequence resource="EMBL" id="BX840233"/>
    </conflict>
    <text>Sequencing errors.</text>
</comment>
<comment type="sequence caution" evidence="4">
    <conflict type="erroneous gene model prediction">
        <sequence resource="EMBL-CDS" id="CAB46001"/>
    </conflict>
</comment>
<comment type="sequence caution" evidence="4">
    <conflict type="erroneous gene model prediction">
        <sequence resource="EMBL-CDS" id="CAB78447"/>
    </conflict>
</comment>
<comment type="online information" name="Pentatricopeptide repeat proteins">
    <link uri="https://ppr.plantenergy.uwa.edu.au"/>
</comment>
<name>PP308_ARATH</name>